<evidence type="ECO:0000250" key="1"/>
<evidence type="ECO:0000256" key="2">
    <source>
        <dbReference type="SAM" id="MobiDB-lite"/>
    </source>
</evidence>
<evidence type="ECO:0000269" key="3">
    <source>
    </source>
</evidence>
<evidence type="ECO:0000269" key="4">
    <source>
    </source>
</evidence>
<evidence type="ECO:0000305" key="5"/>
<evidence type="ECO:0000305" key="6">
    <source>
    </source>
</evidence>
<gene>
    <name type="primary">HTA1</name>
</gene>
<dbReference type="PIR" id="A02600">
    <property type="entry name" value="HSTE91"/>
</dbReference>
<dbReference type="SMR" id="P02273"/>
<dbReference type="iPTMnet" id="P02273"/>
<dbReference type="GO" id="GO:0000786">
    <property type="term" value="C:nucleosome"/>
    <property type="evidence" value="ECO:0007669"/>
    <property type="project" value="UniProtKB-KW"/>
</dbReference>
<dbReference type="GO" id="GO:0005634">
    <property type="term" value="C:nucleus"/>
    <property type="evidence" value="ECO:0007669"/>
    <property type="project" value="UniProtKB-SubCell"/>
</dbReference>
<dbReference type="GO" id="GO:0003677">
    <property type="term" value="F:DNA binding"/>
    <property type="evidence" value="ECO:0007669"/>
    <property type="project" value="UniProtKB-KW"/>
</dbReference>
<dbReference type="GO" id="GO:0046982">
    <property type="term" value="F:protein heterodimerization activity"/>
    <property type="evidence" value="ECO:0007669"/>
    <property type="project" value="InterPro"/>
</dbReference>
<dbReference type="GO" id="GO:0030527">
    <property type="term" value="F:structural constituent of chromatin"/>
    <property type="evidence" value="ECO:0007669"/>
    <property type="project" value="InterPro"/>
</dbReference>
<dbReference type="CDD" id="cd00074">
    <property type="entry name" value="HFD_H2A"/>
    <property type="match status" value="1"/>
</dbReference>
<dbReference type="FunFam" id="1.10.20.10:FF:000026">
    <property type="entry name" value="Histone H2A"/>
    <property type="match status" value="1"/>
</dbReference>
<dbReference type="Gene3D" id="1.10.20.10">
    <property type="entry name" value="Histone, subunit A"/>
    <property type="match status" value="1"/>
</dbReference>
<dbReference type="InterPro" id="IPR009072">
    <property type="entry name" value="Histone-fold"/>
</dbReference>
<dbReference type="InterPro" id="IPR002119">
    <property type="entry name" value="Histone_H2A"/>
</dbReference>
<dbReference type="InterPro" id="IPR007125">
    <property type="entry name" value="Histone_H2A/H2B/H3"/>
</dbReference>
<dbReference type="InterPro" id="IPR032454">
    <property type="entry name" value="Histone_H2A_C"/>
</dbReference>
<dbReference type="InterPro" id="IPR032458">
    <property type="entry name" value="Histone_H2A_CS"/>
</dbReference>
<dbReference type="PANTHER" id="PTHR23430">
    <property type="entry name" value="HISTONE H2A"/>
    <property type="match status" value="1"/>
</dbReference>
<dbReference type="Pfam" id="PF00125">
    <property type="entry name" value="Histone"/>
    <property type="match status" value="1"/>
</dbReference>
<dbReference type="Pfam" id="PF16211">
    <property type="entry name" value="Histone_H2A_C"/>
    <property type="match status" value="1"/>
</dbReference>
<dbReference type="PRINTS" id="PR00620">
    <property type="entry name" value="HISTONEH2A"/>
</dbReference>
<dbReference type="SMART" id="SM00414">
    <property type="entry name" value="H2A"/>
    <property type="match status" value="1"/>
</dbReference>
<dbReference type="SUPFAM" id="SSF47113">
    <property type="entry name" value="Histone-fold"/>
    <property type="match status" value="1"/>
</dbReference>
<dbReference type="PROSITE" id="PS00046">
    <property type="entry name" value="HISTONE_H2A"/>
    <property type="match status" value="1"/>
</dbReference>
<proteinExistence type="evidence at protein level"/>
<keyword id="KW-0007">Acetylation</keyword>
<keyword id="KW-0158">Chromosome</keyword>
<keyword id="KW-0903">Direct protein sequencing</keyword>
<keyword id="KW-0238">DNA-binding</keyword>
<keyword id="KW-1017">Isopeptide bond</keyword>
<keyword id="KW-0544">Nucleosome core</keyword>
<keyword id="KW-0539">Nucleus</keyword>
<keyword id="KW-0597">Phosphoprotein</keyword>
<keyword id="KW-0832">Ubl conjugation</keyword>
<reference key="1">
    <citation type="journal article" date="1983" name="J. Biochem.">
        <title>Tetrahymena histone H2A. Isolation and two variant sequences.</title>
        <authorList>
            <person name="Fusauchi Y."/>
            <person name="Iwai K."/>
        </authorList>
    </citation>
    <scope>PROTEIN SEQUENCE OF 2-138</scope>
</reference>
<reference key="2">
    <citation type="journal article" date="1984" name="J. Biochem.">
        <title>Tetrahymena histone H2A. Acetylation in the N-terminal sequence and phosphorylation in the C-terminal sequence.</title>
        <authorList>
            <person name="Fusauchi Y."/>
            <person name="Iwai K."/>
        </authorList>
    </citation>
    <scope>ACETYLATION AT SER-2; LYS-6 AND LYS-13</scope>
    <scope>PHOSPHORYLATION AT SER-123; SER-125 AND SER-130</scope>
</reference>
<reference key="3">
    <citation type="journal article" date="1985" name="J. Biochem.">
        <title>Tetrahymena ubiquitin-histone conjugate uH2A. Isolation and structural analysis.</title>
        <authorList>
            <person name="Fusauchi Y."/>
            <person name="Iwai K."/>
        </authorList>
    </citation>
    <scope>UBIQUITINATION</scope>
    <scope>IDENTIFICATION OF PROBABLE UBIQUITINATION SITE</scope>
</reference>
<organism>
    <name type="scientific">Tetrahymena pyriformis</name>
    <dbReference type="NCBI Taxonomy" id="5908"/>
    <lineage>
        <taxon>Eukaryota</taxon>
        <taxon>Sar</taxon>
        <taxon>Alveolata</taxon>
        <taxon>Ciliophora</taxon>
        <taxon>Intramacronucleata</taxon>
        <taxon>Oligohymenophorea</taxon>
        <taxon>Hymenostomatida</taxon>
        <taxon>Tetrahymenina</taxon>
        <taxon>Tetrahymenidae</taxon>
        <taxon>Tetrahymena</taxon>
    </lineage>
</organism>
<name>H2AX_TETPY</name>
<comment type="function">
    <text>Core component of nucleosome. Nucleosomes wrap and compact DNA into chromatin, limiting DNA accessibility to the cellular machineries which require DNA as a template. Histones thereby play a central role in transcription regulation, DNA repair, DNA replication and chromosomal stability. DNA accessibility is regulated via a complex set of post-translational modifications of histones, also called histone code, and nucleosome remodeling.</text>
</comment>
<comment type="subunit">
    <text>The nucleosome is a histone octamer containing two molecules each of H2A, H2B, H3 and H4 assembled in one H3-H4 heterotetramer and two H2A-H2B heterodimers. The octamer wraps approximately 147 bp of DNA.</text>
</comment>
<comment type="subcellular location">
    <subcellularLocation>
        <location>Nucleus</location>
    </subcellularLocation>
    <subcellularLocation>
        <location>Chromosome</location>
    </subcellularLocation>
    <text evidence="1">Localizes to both the large, transcriptionally active, somatic macronucleus (MAC) and the small, transcriptionally inert, germ line micronucleus (MIC).</text>
</comment>
<comment type="domain">
    <text>The [ST]-Q motif constitutes a recognition sequence for kinases from the PI3/PI4-kinase family.</text>
</comment>
<comment type="PTM">
    <text evidence="1">Monoubiquitination of Lys-124 gives a specific tag for epigenetic transcriptional repression.</text>
</comment>
<comment type="PTM">
    <text evidence="1">Acetylation occurs almost exclusively in the MAC.</text>
</comment>
<comment type="similarity">
    <text evidence="5">Belongs to the histone H2A family.</text>
</comment>
<comment type="caution">
    <text evidence="5">To ensure consistency between histone entries, we follow the 'Brno' nomenclature for histone modifications, with positions referring to those used in the literature for the 'closest' model organism. Due to slight variations in histone sequences between organisms and to the presence of initiator methionine in UniProtKB/Swiss-Prot sequences, the actual positions of modified amino acids in the sequence generally differ. In this entry the following conventions are used: H2AK5ac = acetylated Lys-6; H2AK8ac = acetylated Lys-9; H2AK10ac = acetylated Lys-11; H2AK12ac = acetylated Lys-13; H2AK17ac = acetylated Lys-18; H2AS122ph = phosphorylated Ser-123; H2AK123ub1 = monoubiquitinated Lys-124; H2AS124ph = phosphorylated Ser-125; H2AS129ph = phosphorylated Ser-130; H2AS134ph = phosphorylated Ser-135.</text>
</comment>
<accession>P02273</accession>
<protein>
    <recommendedName>
        <fullName>Histone H2AX</fullName>
    </recommendedName>
    <alternativeName>
        <fullName>Histone H2A.1</fullName>
        <shortName>H2A1</shortName>
    </alternativeName>
    <alternativeName>
        <fullName>Histone H2A.X</fullName>
    </alternativeName>
</protein>
<sequence>MSTTGKGGKAKGKTASSKQVSRSARAGLQFPVGRISRFLKHGRYSERIGTGAPVYLAAVLEYLAAEVLELAGNAAKDNKKTRIVPRHILLAIRNDEELNKLMANTTIADGGVLPNINPMLLPSKSKKTESRGQASQDI</sequence>
<feature type="initiator methionine" description="Removed" evidence="3 4">
    <location>
        <position position="1"/>
    </location>
</feature>
<feature type="chain" id="PRO_0000055283" description="Histone H2AX">
    <location>
        <begin position="2"/>
        <end position="138"/>
    </location>
</feature>
<feature type="region of interest" description="Disordered" evidence="2">
    <location>
        <begin position="1"/>
        <end position="23"/>
    </location>
</feature>
<feature type="short sequence motif" description="[ST]-Q motif">
    <location>
        <begin position="135"/>
        <end position="136"/>
    </location>
</feature>
<feature type="modified residue" description="N-acetylserine" evidence="3">
    <location>
        <position position="2"/>
    </location>
</feature>
<feature type="modified residue" description="N6-acetyllysine" evidence="3">
    <location>
        <position position="6"/>
    </location>
</feature>
<feature type="modified residue" description="N6-acetyllysine" evidence="1">
    <location>
        <position position="9"/>
    </location>
</feature>
<feature type="modified residue" description="N6-acetyllysine" evidence="1">
    <location>
        <position position="11"/>
    </location>
</feature>
<feature type="modified residue" description="N6-acetyllysine" evidence="3">
    <location>
        <position position="13"/>
    </location>
</feature>
<feature type="modified residue" description="N6-acetyllysine" evidence="1">
    <location>
        <position position="18"/>
    </location>
</feature>
<feature type="modified residue" description="Phosphoserine" evidence="3">
    <location>
        <position position="123"/>
    </location>
</feature>
<feature type="modified residue" description="Phosphoserine" evidence="3">
    <location>
        <position position="125"/>
    </location>
</feature>
<feature type="modified residue" description="Phosphoserine" evidence="3">
    <location>
        <position position="130"/>
    </location>
</feature>
<feature type="modified residue" description="Phosphoserine" evidence="1">
    <location>
        <position position="135"/>
    </location>
</feature>
<feature type="cross-link" description="Glycyl lysine isopeptide (Lys-Gly) (interchain with G-Cter in ubiquitin)" evidence="6">
    <location>
        <position position="124"/>
    </location>
</feature>